<protein>
    <recommendedName>
        <fullName evidence="3">Probable ABC transporter periplasmic-binding protein SapA</fullName>
    </recommendedName>
</protein>
<sequence>MRQVLSSLLVIAGLVSGQAIAAPESPPHADIRDSGFVYCVSGQVNTFNPSKASSGLIVDTLAAQFYDRLLDVDPYTYRLMPELAESWEVLDNGATYRFHLRRDVPFQKTDWFTPTRKMNADDVVFTFQRIFDRNNPWHNVNGSNFPYFDSLQFADNVKSVRKLDNHTVEFRLAQPDASFLWHLATHYASVMSAEYARKLEKEDRQEQLDRQPVGTGPYQLSEYRAGQFIRLQRHDDFWRGKPLMPQVVVDLGSGGTGRLSKLLTGECDVLAWPAASQLSILRDDPRLRLTLRPGMNVAYLAFNTAKPPLNNPAVRHALALAINNQRLMQSIYYGTAETAASILPRASWAYDNEAKITEYNPAKSREQLKSLGLENLTLKLWVPTRSQAWNPSPLKTAELIQADMAQVGVKVVIVPVEGRFQEARLMDMSHDLTLSGWATDSNDPDSFFRPLLSCAAIHSQTNLAHWCDPKFDSVLRKALSSQQLAARIEAYDEAQSILAQELPILPLASSLRLQAYRYDIKGLVLSPFGNASFAGVYREKQDEVKKP</sequence>
<proteinExistence type="inferred from homology"/>
<feature type="signal peptide" evidence="1">
    <location>
        <begin position="1"/>
        <end position="21"/>
    </location>
</feature>
<feature type="chain" id="PRO_0000031801" description="Probable ABC transporter periplasmic-binding protein SapA">
    <location>
        <begin position="22"/>
        <end position="547"/>
    </location>
</feature>
<feature type="sequence conflict" description="In Ref. 2." evidence="3" ref="2">
    <original>SG</original>
    <variation>RV</variation>
    <location>
        <begin position="34"/>
        <end position="35"/>
    </location>
</feature>
<evidence type="ECO:0000255" key="1"/>
<evidence type="ECO:0000269" key="2">
    <source>
    </source>
</evidence>
<evidence type="ECO:0000305" key="3"/>
<gene>
    <name type="primary">sapA</name>
    <name type="ordered locus">b1294</name>
    <name type="ordered locus">JW1287</name>
</gene>
<reference key="1">
    <citation type="journal article" date="2001" name="Microbiology">
        <title>Identification of the ABC protein SapD as the subunit that confers ATP dependence to the K+-uptake systems Trk(H) and Trk(G) from Escherichia coli K-12.</title>
        <authorList>
            <person name="Harms C."/>
            <person name="Domoto Y."/>
            <person name="Celik C."/>
            <person name="Rahe E."/>
            <person name="Stumpe S."/>
            <person name="Schmid R."/>
            <person name="Nakamura T."/>
            <person name="Bakker E.P."/>
        </authorList>
    </citation>
    <scope>NUCLEOTIDE SEQUENCE [GENOMIC DNA]</scope>
    <source>
        <strain>K12 / FRAG5</strain>
    </source>
</reference>
<reference key="2">
    <citation type="journal article" date="1996" name="DNA Res.">
        <title>A 570-kb DNA sequence of the Escherichia coli K-12 genome corresponding to the 28.0-40.1 min region on the linkage map.</title>
        <authorList>
            <person name="Aiba H."/>
            <person name="Baba T."/>
            <person name="Fujita K."/>
            <person name="Hayashi K."/>
            <person name="Inada T."/>
            <person name="Isono K."/>
            <person name="Itoh T."/>
            <person name="Kasai H."/>
            <person name="Kashimoto K."/>
            <person name="Kimura S."/>
            <person name="Kitakawa M."/>
            <person name="Kitagawa M."/>
            <person name="Makino K."/>
            <person name="Miki T."/>
            <person name="Mizobuchi K."/>
            <person name="Mori H."/>
            <person name="Mori T."/>
            <person name="Motomura K."/>
            <person name="Nakade S."/>
            <person name="Nakamura Y."/>
            <person name="Nashimoto H."/>
            <person name="Nishio Y."/>
            <person name="Oshima T."/>
            <person name="Saito N."/>
            <person name="Sampei G."/>
            <person name="Seki Y."/>
            <person name="Sivasundaram S."/>
            <person name="Tagami H."/>
            <person name="Takeda J."/>
            <person name="Takemoto K."/>
            <person name="Takeuchi Y."/>
            <person name="Wada C."/>
            <person name="Yamamoto Y."/>
            <person name="Horiuchi T."/>
        </authorList>
    </citation>
    <scope>NUCLEOTIDE SEQUENCE [LARGE SCALE GENOMIC DNA]</scope>
    <source>
        <strain>K12 / W3110 / ATCC 27325 / DSM 5911</strain>
    </source>
</reference>
<reference key="3">
    <citation type="journal article" date="1997" name="Science">
        <title>The complete genome sequence of Escherichia coli K-12.</title>
        <authorList>
            <person name="Blattner F.R."/>
            <person name="Plunkett G. III"/>
            <person name="Bloch C.A."/>
            <person name="Perna N.T."/>
            <person name="Burland V."/>
            <person name="Riley M."/>
            <person name="Collado-Vides J."/>
            <person name="Glasner J.D."/>
            <person name="Rode C.K."/>
            <person name="Mayhew G.F."/>
            <person name="Gregor J."/>
            <person name="Davis N.W."/>
            <person name="Kirkpatrick H.A."/>
            <person name="Goeden M.A."/>
            <person name="Rose D.J."/>
            <person name="Mau B."/>
            <person name="Shao Y."/>
        </authorList>
    </citation>
    <scope>NUCLEOTIDE SEQUENCE [LARGE SCALE GENOMIC DNA]</scope>
    <source>
        <strain>K12 / MG1655 / ATCC 47076</strain>
    </source>
</reference>
<reference key="4">
    <citation type="journal article" date="2006" name="Mol. Syst. Biol.">
        <title>Highly accurate genome sequences of Escherichia coli K-12 strains MG1655 and W3110.</title>
        <authorList>
            <person name="Hayashi K."/>
            <person name="Morooka N."/>
            <person name="Yamamoto Y."/>
            <person name="Fujita K."/>
            <person name="Isono K."/>
            <person name="Choi S."/>
            <person name="Ohtsubo E."/>
            <person name="Baba T."/>
            <person name="Wanner B.L."/>
            <person name="Mori H."/>
            <person name="Horiuchi T."/>
        </authorList>
    </citation>
    <scope>NUCLEOTIDE SEQUENCE [LARGE SCALE GENOMIC DNA]</scope>
    <scope>SEQUENCE REVISION TO 34-35</scope>
    <source>
        <strain>K12 / W3110 / ATCC 27325 / DSM 5911</strain>
    </source>
</reference>
<reference key="5">
    <citation type="journal article" date="2016" name="J. Biol. Chem.">
        <title>A novel putrescine exporter SapBCDF of Escherichia coli.</title>
        <authorList>
            <person name="Sugiyama Y."/>
            <person name="Nakamura A."/>
            <person name="Matsumoto M."/>
            <person name="Kanbe A."/>
            <person name="Sakanaka M."/>
            <person name="Higashi K."/>
            <person name="Igarashi K."/>
            <person name="Katayama T."/>
            <person name="Suzuki H."/>
            <person name="Kurihara S."/>
        </authorList>
    </citation>
    <scope>FUNCTION</scope>
    <scope>DISRUPTION PHENOTYPE</scope>
    <source>
        <strain>K12 / BW25113</strain>
        <strain>K12 / MG1655 / ATCC 47076</strain>
    </source>
</reference>
<comment type="function">
    <text evidence="2">Not part of a putrescine export system (PubMed:27803167). Very similar to a S.typhimurium protein implicated in antimicrobial peptide resistance, but the SapBCDF operon in E.coli is implicated in putrescine export (PubMed:27803167).</text>
</comment>
<comment type="subcellular location">
    <subcellularLocation>
        <location evidence="3">Periplasm</location>
    </subcellularLocation>
</comment>
<comment type="disruption phenotype">
    <text evidence="2">No change in extracellular putrescine levels.</text>
</comment>
<comment type="similarity">
    <text evidence="3">Belongs to the bacterial solute-binding protein 5 family.</text>
</comment>
<dbReference type="EMBL" id="X97282">
    <property type="protein sequence ID" value="CAA65937.1"/>
    <property type="molecule type" value="Genomic_DNA"/>
</dbReference>
<dbReference type="EMBL" id="U00096">
    <property type="protein sequence ID" value="AAC74376.1"/>
    <property type="molecule type" value="Genomic_DNA"/>
</dbReference>
<dbReference type="EMBL" id="AP009048">
    <property type="protein sequence ID" value="BAA14855.2"/>
    <property type="molecule type" value="Genomic_DNA"/>
</dbReference>
<dbReference type="PIR" id="A64878">
    <property type="entry name" value="A64878"/>
</dbReference>
<dbReference type="RefSeq" id="NP_415810.1">
    <property type="nucleotide sequence ID" value="NC_000913.3"/>
</dbReference>
<dbReference type="RefSeq" id="WP_001250216.1">
    <property type="nucleotide sequence ID" value="NZ_SSZK01000012.1"/>
</dbReference>
<dbReference type="SMR" id="Q47622"/>
<dbReference type="BioGRID" id="4261257">
    <property type="interactions" value="259"/>
</dbReference>
<dbReference type="ComplexPortal" id="CPX-4422">
    <property type="entry name" value="Putative peptide ABC transporter"/>
</dbReference>
<dbReference type="DIP" id="DIP-10822N"/>
<dbReference type="FunCoup" id="Q47622">
    <property type="interactions" value="320"/>
</dbReference>
<dbReference type="IntAct" id="Q47622">
    <property type="interactions" value="5"/>
</dbReference>
<dbReference type="STRING" id="511145.b1294"/>
<dbReference type="TCDB" id="3.A.1.5.42">
    <property type="family name" value="the atp-binding cassette (abc) superfamily"/>
</dbReference>
<dbReference type="jPOST" id="Q47622"/>
<dbReference type="PaxDb" id="511145-b1294"/>
<dbReference type="EnsemblBacteria" id="AAC74376">
    <property type="protein sequence ID" value="AAC74376"/>
    <property type="gene ID" value="b1294"/>
</dbReference>
<dbReference type="GeneID" id="945873"/>
<dbReference type="KEGG" id="ecj:JW1287"/>
<dbReference type="KEGG" id="eco:b1294"/>
<dbReference type="KEGG" id="ecoc:C3026_07595"/>
<dbReference type="PATRIC" id="fig|1411691.4.peg.985"/>
<dbReference type="EchoBASE" id="EB4155"/>
<dbReference type="eggNOG" id="COG4166">
    <property type="taxonomic scope" value="Bacteria"/>
</dbReference>
<dbReference type="HOGENOM" id="CLU_017028_7_0_6"/>
<dbReference type="InParanoid" id="Q47622"/>
<dbReference type="OMA" id="HPWHNVN"/>
<dbReference type="OrthoDB" id="9801912at2"/>
<dbReference type="PhylomeDB" id="Q47622"/>
<dbReference type="BioCyc" id="EcoCyc:SAPA-MONOMER"/>
<dbReference type="BRENDA" id="7.6.2.11">
    <property type="organism ID" value="2026"/>
</dbReference>
<dbReference type="PRO" id="PR:Q47622"/>
<dbReference type="Proteomes" id="UP000000625">
    <property type="component" value="Chromosome"/>
</dbReference>
<dbReference type="GO" id="GO:0055052">
    <property type="term" value="C:ATP-binding cassette (ABC) transporter complex, substrate-binding subunit-containing"/>
    <property type="evidence" value="ECO:0000303"/>
    <property type="project" value="ComplexPortal"/>
</dbReference>
<dbReference type="GO" id="GO:0016020">
    <property type="term" value="C:membrane"/>
    <property type="evidence" value="ECO:0000303"/>
    <property type="project" value="ComplexPortal"/>
</dbReference>
<dbReference type="GO" id="GO:0030288">
    <property type="term" value="C:outer membrane-bounded periplasmic space"/>
    <property type="evidence" value="ECO:0007669"/>
    <property type="project" value="UniProtKB-ARBA"/>
</dbReference>
<dbReference type="GO" id="GO:1904680">
    <property type="term" value="F:peptide transmembrane transporter activity"/>
    <property type="evidence" value="ECO:0000318"/>
    <property type="project" value="GO_Central"/>
</dbReference>
<dbReference type="GO" id="GO:0015833">
    <property type="term" value="P:peptide transport"/>
    <property type="evidence" value="ECO:0000318"/>
    <property type="project" value="GO_Central"/>
</dbReference>
<dbReference type="CDD" id="cd08493">
    <property type="entry name" value="PBP2_DppA_like"/>
    <property type="match status" value="1"/>
</dbReference>
<dbReference type="FunFam" id="3.10.105.10:FF:000004">
    <property type="entry name" value="Peptide ABC transporter substrate-binding protein SapA"/>
    <property type="match status" value="1"/>
</dbReference>
<dbReference type="FunFam" id="3.90.76.10:FF:000005">
    <property type="entry name" value="Peptide ABC transporter substrate-binding protein SapA"/>
    <property type="match status" value="1"/>
</dbReference>
<dbReference type="Gene3D" id="3.90.76.10">
    <property type="entry name" value="Dipeptide-binding Protein, Domain 1"/>
    <property type="match status" value="1"/>
</dbReference>
<dbReference type="Gene3D" id="3.10.105.10">
    <property type="entry name" value="Dipeptide-binding Protein, Domain 3"/>
    <property type="match status" value="1"/>
</dbReference>
<dbReference type="Gene3D" id="3.40.190.10">
    <property type="entry name" value="Periplasmic binding protein-like II"/>
    <property type="match status" value="1"/>
</dbReference>
<dbReference type="InterPro" id="IPR030678">
    <property type="entry name" value="Peptide/Ni-bd"/>
</dbReference>
<dbReference type="InterPro" id="IPR039424">
    <property type="entry name" value="SBP_5"/>
</dbReference>
<dbReference type="InterPro" id="IPR023765">
    <property type="entry name" value="SBP_5_CS"/>
</dbReference>
<dbReference type="InterPro" id="IPR000914">
    <property type="entry name" value="SBP_5_dom"/>
</dbReference>
<dbReference type="NCBIfam" id="NF011689">
    <property type="entry name" value="PRK15109.1"/>
    <property type="match status" value="1"/>
</dbReference>
<dbReference type="PANTHER" id="PTHR30290:SF28">
    <property type="entry name" value="ABC TRANSPORTER PERIPLASMIC-BINDING PROTEIN SAPA-RELATED"/>
    <property type="match status" value="1"/>
</dbReference>
<dbReference type="PANTHER" id="PTHR30290">
    <property type="entry name" value="PERIPLASMIC BINDING COMPONENT OF ABC TRANSPORTER"/>
    <property type="match status" value="1"/>
</dbReference>
<dbReference type="Pfam" id="PF00496">
    <property type="entry name" value="SBP_bac_5"/>
    <property type="match status" value="1"/>
</dbReference>
<dbReference type="PIRSF" id="PIRSF002741">
    <property type="entry name" value="MppA"/>
    <property type="match status" value="1"/>
</dbReference>
<dbReference type="SUPFAM" id="SSF53850">
    <property type="entry name" value="Periplasmic binding protein-like II"/>
    <property type="match status" value="1"/>
</dbReference>
<dbReference type="PROSITE" id="PS01040">
    <property type="entry name" value="SBP_BACTERIAL_5"/>
    <property type="match status" value="1"/>
</dbReference>
<accession>Q47622</accession>
<accession>P77358</accession>
<organism>
    <name type="scientific">Escherichia coli (strain K12)</name>
    <dbReference type="NCBI Taxonomy" id="83333"/>
    <lineage>
        <taxon>Bacteria</taxon>
        <taxon>Pseudomonadati</taxon>
        <taxon>Pseudomonadota</taxon>
        <taxon>Gammaproteobacteria</taxon>
        <taxon>Enterobacterales</taxon>
        <taxon>Enterobacteriaceae</taxon>
        <taxon>Escherichia</taxon>
    </lineage>
</organism>
<keyword id="KW-0574">Periplasm</keyword>
<keyword id="KW-1185">Reference proteome</keyword>
<keyword id="KW-0732">Signal</keyword>
<keyword id="KW-0813">Transport</keyword>
<name>SAPA_ECOLI</name>